<dbReference type="EMBL" id="BC105623">
    <property type="protein sequence ID" value="AAI05624.1"/>
    <property type="molecule type" value="mRNA"/>
</dbReference>
<dbReference type="RefSeq" id="NP_001070699.1">
    <property type="nucleotide sequence ID" value="NM_001077231.1"/>
</dbReference>
<dbReference type="RefSeq" id="XP_063133662.1">
    <property type="nucleotide sequence ID" value="XM_063277592.1"/>
</dbReference>
<dbReference type="SMR" id="Q0VGK2"/>
<dbReference type="FunCoup" id="Q0VGK2">
    <property type="interactions" value="138"/>
</dbReference>
<dbReference type="STRING" id="10116.ENSRNOP00000070222"/>
<dbReference type="PhosphoSitePlus" id="Q0VGK2"/>
<dbReference type="PaxDb" id="10116-ENSRNOP00000064542"/>
<dbReference type="GeneID" id="686179"/>
<dbReference type="AGR" id="RGD:1585423"/>
<dbReference type="CTD" id="125488"/>
<dbReference type="RGD" id="1585423">
    <property type="gene designation" value="Ttc39c"/>
</dbReference>
<dbReference type="VEuPathDB" id="HostDB:ENSRNOG00000050949"/>
<dbReference type="eggNOG" id="KOG3783">
    <property type="taxonomic scope" value="Eukaryota"/>
</dbReference>
<dbReference type="InParanoid" id="Q0VGK2"/>
<dbReference type="PhylomeDB" id="Q0VGK2"/>
<dbReference type="PRO" id="PR:Q0VGK2"/>
<dbReference type="Proteomes" id="UP000002494">
    <property type="component" value="Chromosome 18"/>
</dbReference>
<dbReference type="Bgee" id="ENSRNOG00000050949">
    <property type="expression patterns" value="Expressed in liver and 19 other cell types or tissues"/>
</dbReference>
<dbReference type="ExpressionAtlas" id="Q0VGK2">
    <property type="expression patterns" value="baseline and differential"/>
</dbReference>
<dbReference type="GO" id="GO:0060271">
    <property type="term" value="P:cilium assembly"/>
    <property type="evidence" value="ECO:0000318"/>
    <property type="project" value="GO_Central"/>
</dbReference>
<dbReference type="GO" id="GO:0032474">
    <property type="term" value="P:otolith morphogenesis"/>
    <property type="evidence" value="ECO:0000318"/>
    <property type="project" value="GO_Central"/>
</dbReference>
<dbReference type="Gene3D" id="1.25.40.10">
    <property type="entry name" value="Tetratricopeptide repeat domain"/>
    <property type="match status" value="1"/>
</dbReference>
<dbReference type="InterPro" id="IPR019412">
    <property type="entry name" value="Iml2/TPR_39"/>
</dbReference>
<dbReference type="InterPro" id="IPR011990">
    <property type="entry name" value="TPR-like_helical_dom_sf"/>
</dbReference>
<dbReference type="PANTHER" id="PTHR31859">
    <property type="entry name" value="TETRATRICOPEPTIDE REPEAT PROTEIN 39 FAMILY MEMBER"/>
    <property type="match status" value="1"/>
</dbReference>
<dbReference type="PANTHER" id="PTHR31859:SF1">
    <property type="entry name" value="TETRATRICOPEPTIDE REPEAT PROTEIN 39C"/>
    <property type="match status" value="1"/>
</dbReference>
<dbReference type="Pfam" id="PF10300">
    <property type="entry name" value="Iml2-TPR_39"/>
    <property type="match status" value="1"/>
</dbReference>
<dbReference type="SUPFAM" id="SSF48452">
    <property type="entry name" value="TPR-like"/>
    <property type="match status" value="1"/>
</dbReference>
<gene>
    <name type="primary">Ttc39c</name>
</gene>
<protein>
    <recommendedName>
        <fullName>Tetratricopeptide repeat protein 39C</fullName>
        <shortName>TPR repeat protein 39C</shortName>
    </recommendedName>
</protein>
<sequence length="522" mass="58978">MSFGASFVSFLNAMMTFEEEKMQLACDDLKTTEKLCESEEAGVIETIKNKIKKNVDARKSTPSMVDRLQRQIIIADCQVYLAVLSFVKQELSAYIKGGWILRKAWKIYNKCYVDINALQELHQKTLTEEPLSSDAANDNHIVAEGVTEEALSRLKGAVSFGYGLFHLCISMVPPNLLKIINLLGFPGDRLQGLSSLTYASESKDMKAPLATLALLWYHTVVRPFFALDGSDNKGGLDEAKAILLRKESAYPNSSLFMFFKGRIQRLECQINSALTSFHTALELAVDQREIQHVCLYEIGWCSMIELNFKDAFDSFERLKNESRWSQCYYAYLTAVCQGATGDVDGAQLIFKEVQKLFKRKNNQIEQFSVKKAERFRKQTPTRALCVLASIEVLYLWKALPNCSLPNLQRMSQACHEVDDSSVVGLKHLLLGAIHKCLGNSQDAVQFFQRAAKDESCRQNNSYVQPYACYELGCLLLDRAETVARGRTLLLQAKEDFSGYDFENRLHVRVHAALASLRELVPQ</sequence>
<organism>
    <name type="scientific">Rattus norvegicus</name>
    <name type="common">Rat</name>
    <dbReference type="NCBI Taxonomy" id="10116"/>
    <lineage>
        <taxon>Eukaryota</taxon>
        <taxon>Metazoa</taxon>
        <taxon>Chordata</taxon>
        <taxon>Craniata</taxon>
        <taxon>Vertebrata</taxon>
        <taxon>Euteleostomi</taxon>
        <taxon>Mammalia</taxon>
        <taxon>Eutheria</taxon>
        <taxon>Euarchontoglires</taxon>
        <taxon>Glires</taxon>
        <taxon>Rodentia</taxon>
        <taxon>Myomorpha</taxon>
        <taxon>Muroidea</taxon>
        <taxon>Muridae</taxon>
        <taxon>Murinae</taxon>
        <taxon>Rattus</taxon>
    </lineage>
</organism>
<proteinExistence type="evidence at transcript level"/>
<name>TT39C_RAT</name>
<reference key="1">
    <citation type="journal article" date="2004" name="Genome Res.">
        <title>The status, quality, and expansion of the NIH full-length cDNA project: the Mammalian Gene Collection (MGC).</title>
        <authorList>
            <consortium name="The MGC Project Team"/>
        </authorList>
    </citation>
    <scope>NUCLEOTIDE SEQUENCE [LARGE SCALE MRNA]</scope>
    <source>
        <tissue>Testis</tissue>
    </source>
</reference>
<comment type="similarity">
    <text evidence="1">Belongs to the TTC39 family.</text>
</comment>
<evidence type="ECO:0000305" key="1"/>
<keyword id="KW-1185">Reference proteome</keyword>
<keyword id="KW-0677">Repeat</keyword>
<keyword id="KW-0802">TPR repeat</keyword>
<feature type="chain" id="PRO_0000294124" description="Tetratricopeptide repeat protein 39C">
    <location>
        <begin position="1"/>
        <end position="522"/>
    </location>
</feature>
<feature type="repeat" description="TPR 1">
    <location>
        <begin position="254"/>
        <end position="287"/>
    </location>
</feature>
<feature type="repeat" description="TPR 2">
    <location>
        <begin position="292"/>
        <end position="325"/>
    </location>
</feature>
<feature type="repeat" description="TPR 3">
    <location>
        <begin position="424"/>
        <end position="457"/>
    </location>
</feature>
<accession>Q0VGK2</accession>